<name>FIP3_CAEEL</name>
<protein>
    <recommendedName>
        <fullName>Fungus-induced protein 3</fullName>
    </recommendedName>
</protein>
<organism>
    <name type="scientific">Caenorhabditis elegans</name>
    <dbReference type="NCBI Taxonomy" id="6239"/>
    <lineage>
        <taxon>Eukaryota</taxon>
        <taxon>Metazoa</taxon>
        <taxon>Ecdysozoa</taxon>
        <taxon>Nematoda</taxon>
        <taxon>Chromadorea</taxon>
        <taxon>Rhabditida</taxon>
        <taxon>Rhabditina</taxon>
        <taxon>Rhabditomorpha</taxon>
        <taxon>Rhabditoidea</taxon>
        <taxon>Rhabditidae</taxon>
        <taxon>Peloderinae</taxon>
        <taxon>Caenorhabditis</taxon>
    </lineage>
</organism>
<feature type="chain" id="PRO_0000065157" description="Fungus-induced protein 3">
    <location>
        <begin position="1"/>
        <end position="50"/>
    </location>
</feature>
<reference key="1">
    <citation type="journal article" date="1994" name="Nature">
        <title>2.2 Mb of contiguous nucleotide sequence from chromosome III of C. elegans.</title>
        <authorList>
            <person name="Wilson R."/>
            <person name="Ainscough R."/>
            <person name="Anderson K."/>
            <person name="Baynes C."/>
            <person name="Berks M."/>
            <person name="Bonfield J."/>
            <person name="Burton J."/>
            <person name="Connell M."/>
            <person name="Copsey T."/>
            <person name="Cooper J."/>
            <person name="Coulson A."/>
            <person name="Craxton M."/>
            <person name="Dear S."/>
            <person name="Du Z."/>
            <person name="Durbin R."/>
            <person name="Favello A."/>
            <person name="Fraser A."/>
            <person name="Fulton L."/>
            <person name="Gardner A."/>
            <person name="Green P."/>
            <person name="Hawkins T."/>
            <person name="Hillier L."/>
            <person name="Jier M."/>
            <person name="Johnston L."/>
            <person name="Jones M."/>
            <person name="Kershaw J."/>
            <person name="Kirsten J."/>
            <person name="Laisster N."/>
            <person name="Latreille P."/>
            <person name="Lightning J."/>
            <person name="Lloyd C."/>
            <person name="Mortimore B."/>
            <person name="O'Callaghan M."/>
            <person name="Parsons J."/>
            <person name="Percy C."/>
            <person name="Rifken L."/>
            <person name="Roopra A."/>
            <person name="Saunders D."/>
            <person name="Shownkeen R."/>
            <person name="Sims M."/>
            <person name="Smaldon N."/>
            <person name="Smith A."/>
            <person name="Smith M."/>
            <person name="Sonnhammer E."/>
            <person name="Staden R."/>
            <person name="Sulston J."/>
            <person name="Thierry-Mieg J."/>
            <person name="Thomas K."/>
            <person name="Vaudin M."/>
            <person name="Vaughan K."/>
            <person name="Waterston R."/>
            <person name="Watson A."/>
            <person name="Weinstock L."/>
            <person name="Wilkinson-Sproat J."/>
            <person name="Wohldman P."/>
        </authorList>
    </citation>
    <scope>NUCLEOTIDE SEQUENCE [LARGE SCALE GENOMIC DNA]</scope>
    <source>
        <strain>Bristol N2</strain>
    </source>
</reference>
<reference key="2">
    <citation type="journal article" date="1998" name="Science">
        <title>Genome sequence of the nematode C. elegans: a platform for investigating biology.</title>
        <authorList>
            <consortium name="The C. elegans sequencing consortium"/>
        </authorList>
    </citation>
    <scope>NUCLEOTIDE SEQUENCE [LARGE SCALE GENOMIC DNA]</scope>
    <source>
        <strain>Bristol N2</strain>
    </source>
</reference>
<dbReference type="EMBL" id="FO080280">
    <property type="protein sequence ID" value="CCD62565.1"/>
    <property type="molecule type" value="Genomic_DNA"/>
</dbReference>
<dbReference type="PIR" id="C88533">
    <property type="entry name" value="C88533"/>
</dbReference>
<dbReference type="RefSeq" id="NP_001367400.1">
    <property type="nucleotide sequence ID" value="NM_001379839.1"/>
</dbReference>
<dbReference type="RefSeq" id="NP_498888.1">
    <property type="nucleotide sequence ID" value="NM_066487.1"/>
</dbReference>
<dbReference type="BioGRID" id="47169">
    <property type="interactions" value="1"/>
</dbReference>
<dbReference type="FunCoup" id="P34300">
    <property type="interactions" value="88"/>
</dbReference>
<dbReference type="STRING" id="6239.C06E1.5.1"/>
<dbReference type="PaxDb" id="6239-C06E1.5"/>
<dbReference type="EnsemblMetazoa" id="C06E1.5.1">
    <property type="protein sequence ID" value="C06E1.5.1"/>
    <property type="gene ID" value="WBGene00015520"/>
</dbReference>
<dbReference type="GeneID" id="54161878"/>
<dbReference type="AGR" id="WB:WBGene00015520"/>
<dbReference type="WormBase" id="C06E1.5">
    <property type="protein sequence ID" value="CE00060"/>
    <property type="gene ID" value="WBGene00015520"/>
    <property type="gene designation" value="fip-3"/>
</dbReference>
<dbReference type="eggNOG" id="ENOG502TJ8R">
    <property type="taxonomic scope" value="Eukaryota"/>
</dbReference>
<dbReference type="GeneTree" id="ENSGT00970000197232"/>
<dbReference type="HOGENOM" id="CLU_3175886_0_0_1"/>
<dbReference type="InParanoid" id="P34300"/>
<dbReference type="PRO" id="PR:P34300"/>
<dbReference type="Proteomes" id="UP000001940">
    <property type="component" value="Chromosome III"/>
</dbReference>
<dbReference type="Bgee" id="WBGene00015520">
    <property type="expression patterns" value="Expressed in pharyngeal muscle cell (C elegans) and 1 other cell type or tissue"/>
</dbReference>
<dbReference type="InterPro" id="IPR052889">
    <property type="entry name" value="Celegans_Fungus-Induced_Rsp"/>
</dbReference>
<dbReference type="InterPro" id="IPR024415">
    <property type="entry name" value="Fungus-induced"/>
</dbReference>
<dbReference type="PANTHER" id="PTHR39380:SF1">
    <property type="entry name" value="FIP (FUNGUS-INDUCED PROTEIN) RELATED-RELATED"/>
    <property type="match status" value="1"/>
</dbReference>
<dbReference type="PANTHER" id="PTHR39380">
    <property type="entry name" value="FIP (FUNGUS-INDUCED PROTEIN) RELATED-RELATED-RELATED"/>
    <property type="match status" value="1"/>
</dbReference>
<dbReference type="Pfam" id="PF10917">
    <property type="entry name" value="Fungus-induced"/>
    <property type="match status" value="1"/>
</dbReference>
<proteinExistence type="predicted"/>
<gene>
    <name type="primary">fip-3</name>
    <name type="ORF">C06E1.5</name>
</gene>
<accession>P34300</accession>
<sequence length="50" mass="4954">MNVYSVFIFAILAISSASGIFLPGGGGKKCGGYGGGYGSGVIIGAERPKK</sequence>
<keyword id="KW-1185">Reference proteome</keyword>